<gene>
    <name evidence="1" type="primary">rplF</name>
    <name type="ordered locus">Minf_0698</name>
</gene>
<sequence>MSRIGKLPIKLPPGIKVSIEGNNVTLEGKKGKLFHRLPEFLKVHQQDGSLILENTADSRQSKAMYGLHRSLLNNAVMGVHEGFQKKLEINGIGFRAAVEGKKLVMNLGFSHPVVYEIPEGISVKVQDNTKLTIEGIDKCLVGAVAADIRGFYVPEPYKGKGIRYAGEVIRRKAGKTAQK</sequence>
<reference key="1">
    <citation type="journal article" date="2008" name="Biol. Direct">
        <title>Complete genome sequence of the extremely acidophilic methanotroph isolate V4, Methylacidiphilum infernorum, a representative of the bacterial phylum Verrucomicrobia.</title>
        <authorList>
            <person name="Hou S."/>
            <person name="Makarova K.S."/>
            <person name="Saw J.H."/>
            <person name="Senin P."/>
            <person name="Ly B.V."/>
            <person name="Zhou Z."/>
            <person name="Ren Y."/>
            <person name="Wang J."/>
            <person name="Galperin M.Y."/>
            <person name="Omelchenko M.V."/>
            <person name="Wolf Y.I."/>
            <person name="Yutin N."/>
            <person name="Koonin E.V."/>
            <person name="Stott M.B."/>
            <person name="Mountain B.W."/>
            <person name="Crowe M.A."/>
            <person name="Smirnova A.V."/>
            <person name="Dunfield P.F."/>
            <person name="Feng L."/>
            <person name="Wang L."/>
            <person name="Alam M."/>
        </authorList>
    </citation>
    <scope>NUCLEOTIDE SEQUENCE [LARGE SCALE GENOMIC DNA]</scope>
    <source>
        <strain>Isolate V4</strain>
    </source>
</reference>
<feature type="chain" id="PRO_1000144013" description="Large ribosomal subunit protein uL6">
    <location>
        <begin position="1"/>
        <end position="179"/>
    </location>
</feature>
<evidence type="ECO:0000255" key="1">
    <source>
        <dbReference type="HAMAP-Rule" id="MF_01365"/>
    </source>
</evidence>
<evidence type="ECO:0000305" key="2"/>
<organism>
    <name type="scientific">Methylacidiphilum infernorum (isolate V4)</name>
    <name type="common">Methylokorus infernorum (strain V4)</name>
    <dbReference type="NCBI Taxonomy" id="481448"/>
    <lineage>
        <taxon>Bacteria</taxon>
        <taxon>Pseudomonadati</taxon>
        <taxon>Verrucomicrobiota</taxon>
        <taxon>Methylacidiphilae</taxon>
        <taxon>Methylacidiphilales</taxon>
        <taxon>Methylacidiphilaceae</taxon>
        <taxon>Methylacidiphilum (ex Ratnadevi et al. 2023)</taxon>
    </lineage>
</organism>
<protein>
    <recommendedName>
        <fullName evidence="1">Large ribosomal subunit protein uL6</fullName>
    </recommendedName>
    <alternativeName>
        <fullName evidence="2">50S ribosomal protein L6</fullName>
    </alternativeName>
</protein>
<dbReference type="EMBL" id="CP000975">
    <property type="protein sequence ID" value="ACD82753.1"/>
    <property type="molecule type" value="Genomic_DNA"/>
</dbReference>
<dbReference type="RefSeq" id="WP_012463035.1">
    <property type="nucleotide sequence ID" value="NC_010794.1"/>
</dbReference>
<dbReference type="SMR" id="B3E0J9"/>
<dbReference type="STRING" id="481448.Minf_0698"/>
<dbReference type="KEGG" id="min:Minf_0698"/>
<dbReference type="eggNOG" id="COG0097">
    <property type="taxonomic scope" value="Bacteria"/>
</dbReference>
<dbReference type="HOGENOM" id="CLU_065464_1_2_0"/>
<dbReference type="OrthoDB" id="9805007at2"/>
<dbReference type="Proteomes" id="UP000009149">
    <property type="component" value="Chromosome"/>
</dbReference>
<dbReference type="GO" id="GO:0022625">
    <property type="term" value="C:cytosolic large ribosomal subunit"/>
    <property type="evidence" value="ECO:0007669"/>
    <property type="project" value="TreeGrafter"/>
</dbReference>
<dbReference type="GO" id="GO:0019843">
    <property type="term" value="F:rRNA binding"/>
    <property type="evidence" value="ECO:0007669"/>
    <property type="project" value="UniProtKB-UniRule"/>
</dbReference>
<dbReference type="GO" id="GO:0003735">
    <property type="term" value="F:structural constituent of ribosome"/>
    <property type="evidence" value="ECO:0007669"/>
    <property type="project" value="InterPro"/>
</dbReference>
<dbReference type="GO" id="GO:0002181">
    <property type="term" value="P:cytoplasmic translation"/>
    <property type="evidence" value="ECO:0007669"/>
    <property type="project" value="TreeGrafter"/>
</dbReference>
<dbReference type="FunFam" id="3.90.930.12:FF:000001">
    <property type="entry name" value="50S ribosomal protein L6"/>
    <property type="match status" value="1"/>
</dbReference>
<dbReference type="FunFam" id="3.90.930.12:FF:000002">
    <property type="entry name" value="50S ribosomal protein L6"/>
    <property type="match status" value="1"/>
</dbReference>
<dbReference type="Gene3D" id="3.90.930.12">
    <property type="entry name" value="Ribosomal protein L6, alpha-beta domain"/>
    <property type="match status" value="2"/>
</dbReference>
<dbReference type="HAMAP" id="MF_01365_B">
    <property type="entry name" value="Ribosomal_uL6_B"/>
    <property type="match status" value="1"/>
</dbReference>
<dbReference type="InterPro" id="IPR000702">
    <property type="entry name" value="Ribosomal_uL6-like"/>
</dbReference>
<dbReference type="InterPro" id="IPR036789">
    <property type="entry name" value="Ribosomal_uL6-like_a/b-dom_sf"/>
</dbReference>
<dbReference type="InterPro" id="IPR020040">
    <property type="entry name" value="Ribosomal_uL6_a/b-dom"/>
</dbReference>
<dbReference type="InterPro" id="IPR019906">
    <property type="entry name" value="Ribosomal_uL6_bac-type"/>
</dbReference>
<dbReference type="InterPro" id="IPR002358">
    <property type="entry name" value="Ribosomal_uL6_CS"/>
</dbReference>
<dbReference type="NCBIfam" id="TIGR03654">
    <property type="entry name" value="L6_bact"/>
    <property type="match status" value="1"/>
</dbReference>
<dbReference type="PANTHER" id="PTHR11655">
    <property type="entry name" value="60S/50S RIBOSOMAL PROTEIN L6/L9"/>
    <property type="match status" value="1"/>
</dbReference>
<dbReference type="PANTHER" id="PTHR11655:SF14">
    <property type="entry name" value="LARGE RIBOSOMAL SUBUNIT PROTEIN UL6M"/>
    <property type="match status" value="1"/>
</dbReference>
<dbReference type="Pfam" id="PF00347">
    <property type="entry name" value="Ribosomal_L6"/>
    <property type="match status" value="2"/>
</dbReference>
<dbReference type="PIRSF" id="PIRSF002162">
    <property type="entry name" value="Ribosomal_L6"/>
    <property type="match status" value="1"/>
</dbReference>
<dbReference type="PRINTS" id="PR00059">
    <property type="entry name" value="RIBOSOMALL6"/>
</dbReference>
<dbReference type="SUPFAM" id="SSF56053">
    <property type="entry name" value="Ribosomal protein L6"/>
    <property type="match status" value="2"/>
</dbReference>
<dbReference type="PROSITE" id="PS00525">
    <property type="entry name" value="RIBOSOMAL_L6_1"/>
    <property type="match status" value="1"/>
</dbReference>
<name>RL6_METI4</name>
<comment type="function">
    <text evidence="1">This protein binds to the 23S rRNA, and is important in its secondary structure. It is located near the subunit interface in the base of the L7/L12 stalk, and near the tRNA binding site of the peptidyltransferase center.</text>
</comment>
<comment type="subunit">
    <text evidence="1">Part of the 50S ribosomal subunit.</text>
</comment>
<comment type="similarity">
    <text evidence="1">Belongs to the universal ribosomal protein uL6 family.</text>
</comment>
<accession>B3E0J9</accession>
<keyword id="KW-0687">Ribonucleoprotein</keyword>
<keyword id="KW-0689">Ribosomal protein</keyword>
<keyword id="KW-0694">RNA-binding</keyword>
<keyword id="KW-0699">rRNA-binding</keyword>
<proteinExistence type="inferred from homology"/>